<reference evidence="4" key="1">
    <citation type="submission" date="2008-07" db="UniProtKB">
        <authorList>
            <person name="Belchi-Navarro S."/>
            <person name="Almagro L."/>
            <person name="Bru R."/>
            <person name="Pedreno M.A."/>
        </authorList>
    </citation>
    <scope>PROTEIN SEQUENCE</scope>
</reference>
<name>PER1_VITVI</name>
<keyword id="KW-0106">Calcium</keyword>
<keyword id="KW-0903">Direct protein sequencing</keyword>
<keyword id="KW-0349">Heme</keyword>
<keyword id="KW-0376">Hydrogen peroxide</keyword>
<keyword id="KW-0408">Iron</keyword>
<keyword id="KW-0479">Metal-binding</keyword>
<keyword id="KW-0560">Oxidoreductase</keyword>
<keyword id="KW-0575">Peroxidase</keyword>
<keyword id="KW-0964">Secreted</keyword>
<comment type="function">
    <text evidence="4">Removal of H(2)O(2), oxidation of toxic reductants, biosynthesis and degradation of lignin, suberization, auxin catabolism, response to environmental stresses such as wounding, pathogen attack and oxidative stress. These functions might be dependent on each isozyme/isoform in each plant tissue.</text>
</comment>
<comment type="catalytic activity">
    <reaction>
        <text>2 a phenolic donor + H2O2 = 2 a phenolic radical donor + 2 H2O</text>
        <dbReference type="Rhea" id="RHEA:56136"/>
        <dbReference type="ChEBI" id="CHEBI:15377"/>
        <dbReference type="ChEBI" id="CHEBI:16240"/>
        <dbReference type="ChEBI" id="CHEBI:139520"/>
        <dbReference type="ChEBI" id="CHEBI:139521"/>
        <dbReference type="EC" id="1.11.1.7"/>
    </reaction>
</comment>
<comment type="cofactor">
    <cofactor evidence="2 3">
        <name>heme b</name>
        <dbReference type="ChEBI" id="CHEBI:60344"/>
    </cofactor>
    <text evidence="2 3">Binds 1 heme b (iron(II)-protoporphyrin IX) group per subunit.</text>
</comment>
<comment type="cofactor">
    <cofactor evidence="2 3">
        <name>Ca(2+)</name>
        <dbReference type="ChEBI" id="CHEBI:29108"/>
    </cofactor>
    <text evidence="2 3">Binds 2 calcium ions per subunit.</text>
</comment>
<comment type="subcellular location">
    <subcellularLocation>
        <location evidence="1 3">Secreted</location>
    </subcellularLocation>
</comment>
<comment type="similarity">
    <text evidence="3">Belongs to the peroxidase family. Classical plant (class III) peroxidase subfamily.</text>
</comment>
<protein>
    <recommendedName>
        <fullName evidence="2">Peroxidase 1</fullName>
        <ecNumber>1.11.1.7</ecNumber>
    </recommendedName>
</protein>
<feature type="chain" id="PRO_0000352652" description="Peroxidase 1">
    <location>
        <begin position="1" status="less than"/>
        <end position="26" status="greater than"/>
    </location>
</feature>
<feature type="binding site" evidence="2 3">
    <location>
        <position position="15"/>
    </location>
    <ligand>
        <name>Ca(2+)</name>
        <dbReference type="ChEBI" id="CHEBI:29108"/>
        <label>2</label>
    </ligand>
</feature>
<feature type="unsure residue" description="I or L">
    <location>
        <position position="6"/>
    </location>
</feature>
<feature type="unsure residue" description="L or I">
    <location>
        <position position="7"/>
    </location>
</feature>
<feature type="unsure residue" description="M or F">
    <location>
        <position position="9"/>
    </location>
</feature>
<feature type="unsure residue" description="Q or K">
    <location>
        <position position="13"/>
    </location>
</feature>
<feature type="unsure residue" description="F or M">
    <location>
        <position position="14"/>
    </location>
</feature>
<feature type="unsure residue" description="K or Q">
    <location>
        <position position="20"/>
    </location>
</feature>
<feature type="unsure residue" description="L or I">
    <location>
        <position position="22"/>
    </location>
</feature>
<feature type="unsure residue" description="Q or K">
    <location>
        <position position="23"/>
    </location>
</feature>
<feature type="unsure residue" description="Q or K">
    <location>
        <position position="24"/>
    </location>
</feature>
<feature type="non-consecutive residues" evidence="4">
    <location>
        <begin position="12"/>
        <end position="13"/>
    </location>
</feature>
<feature type="non-terminal residue">
    <location>
        <position position="1"/>
    </location>
</feature>
<feature type="non-terminal residue">
    <location>
        <position position="26"/>
    </location>
</feature>
<proteinExistence type="evidence at protein level"/>
<sequence length="26" mass="3007">VSCADILTMATRQFDNVYYKNLQQGK</sequence>
<evidence type="ECO:0000250" key="1">
    <source>
        <dbReference type="UniProtKB" id="P84516"/>
    </source>
</evidence>
<evidence type="ECO:0000250" key="2">
    <source>
        <dbReference type="UniProtKB" id="Q39034"/>
    </source>
</evidence>
<evidence type="ECO:0000255" key="3">
    <source>
        <dbReference type="PROSITE-ProRule" id="PRU00297"/>
    </source>
</evidence>
<evidence type="ECO:0000305" key="4"/>
<organism>
    <name type="scientific">Vitis vinifera</name>
    <name type="common">Grape</name>
    <dbReference type="NCBI Taxonomy" id="29760"/>
    <lineage>
        <taxon>Eukaryota</taxon>
        <taxon>Viridiplantae</taxon>
        <taxon>Streptophyta</taxon>
        <taxon>Embryophyta</taxon>
        <taxon>Tracheophyta</taxon>
        <taxon>Spermatophyta</taxon>
        <taxon>Magnoliopsida</taxon>
        <taxon>eudicotyledons</taxon>
        <taxon>Gunneridae</taxon>
        <taxon>Pentapetalae</taxon>
        <taxon>rosids</taxon>
        <taxon>Vitales</taxon>
        <taxon>Vitaceae</taxon>
        <taxon>Viteae</taxon>
        <taxon>Vitis</taxon>
    </lineage>
</organism>
<dbReference type="EC" id="1.11.1.7"/>
<dbReference type="GO" id="GO:0005576">
    <property type="term" value="C:extracellular region"/>
    <property type="evidence" value="ECO:0007669"/>
    <property type="project" value="UniProtKB-SubCell"/>
</dbReference>
<dbReference type="GO" id="GO:0140825">
    <property type="term" value="F:lactoperoxidase activity"/>
    <property type="evidence" value="ECO:0007669"/>
    <property type="project" value="UniProtKB-EC"/>
</dbReference>
<dbReference type="GO" id="GO:0046872">
    <property type="term" value="F:metal ion binding"/>
    <property type="evidence" value="ECO:0007669"/>
    <property type="project" value="UniProtKB-KW"/>
</dbReference>
<dbReference type="GO" id="GO:0042744">
    <property type="term" value="P:hydrogen peroxide catabolic process"/>
    <property type="evidence" value="ECO:0007669"/>
    <property type="project" value="UniProtKB-KW"/>
</dbReference>
<accession>P86014</accession>